<organism>
    <name type="scientific">Acidianus bottle-shaped virus (isolate Italy/Pozzuoli)</name>
    <name type="common">ABV</name>
    <dbReference type="NCBI Taxonomy" id="654911"/>
    <lineage>
        <taxon>Viruses</taxon>
        <taxon>Viruses incertae sedis</taxon>
        <taxon>Ampullaviridae</taxon>
        <taxon>Bottigliavirus</taxon>
        <taxon>Bottigliavirus ABV</taxon>
    </lineage>
</organism>
<name>Y086_ABVP</name>
<dbReference type="EMBL" id="EF432053">
    <property type="protein sequence ID" value="ABP73422.1"/>
    <property type="molecule type" value="Genomic_DNA"/>
</dbReference>
<dbReference type="RefSeq" id="YP_001210336.1">
    <property type="nucleotide sequence ID" value="NC_009452.1"/>
</dbReference>
<dbReference type="GeneID" id="5129840"/>
<dbReference type="KEGG" id="vg:5129840"/>
<dbReference type="Proteomes" id="UP000000513">
    <property type="component" value="Segment"/>
</dbReference>
<keyword id="KW-1185">Reference proteome</keyword>
<accession>A4ZUB8</accession>
<feature type="chain" id="PRO_0000384839" description="Uncharacterized protein ORF86">
    <location>
        <begin position="1"/>
        <end position="86"/>
    </location>
</feature>
<sequence>MNYENLDKFMNFLKENVKIVRVGVVFDALKHDKRFKEFVGVKKLRKSAIYNYSQRGIILGKGSLVVYDPDEVRRIADNFFKDSIRS</sequence>
<organismHost>
    <name type="scientific">Acidianus convivator</name>
    <dbReference type="NCBI Taxonomy" id="269667"/>
</organismHost>
<proteinExistence type="predicted"/>
<reference key="1">
    <citation type="journal article" date="2007" name="Virology">
        <title>Genome of the Acidianus bottle-shaped virus and insights into the replication and packaging mechanisms.</title>
        <authorList>
            <person name="Peng X."/>
            <person name="Basta T."/>
            <person name="Haring M."/>
            <person name="Garrett R.A."/>
            <person name="Prangishvili D."/>
        </authorList>
    </citation>
    <scope>NUCLEOTIDE SEQUENCE [GENOMIC DNA]</scope>
</reference>
<gene>
    <name type="ORF">ORF86</name>
</gene>
<protein>
    <recommendedName>
        <fullName>Uncharacterized protein ORF86</fullName>
    </recommendedName>
</protein>